<name>PUR5_PICP2</name>
<evidence type="ECO:0000255" key="1">
    <source>
        <dbReference type="HAMAP-Rule" id="MF_00741"/>
    </source>
</evidence>
<comment type="catalytic activity">
    <reaction evidence="1">
        <text>2-formamido-N(1)-(5-O-phospho-beta-D-ribosyl)acetamidine + ATP = 5-amino-1-(5-phospho-beta-D-ribosyl)imidazole + ADP + phosphate + H(+)</text>
        <dbReference type="Rhea" id="RHEA:23032"/>
        <dbReference type="ChEBI" id="CHEBI:15378"/>
        <dbReference type="ChEBI" id="CHEBI:30616"/>
        <dbReference type="ChEBI" id="CHEBI:43474"/>
        <dbReference type="ChEBI" id="CHEBI:137981"/>
        <dbReference type="ChEBI" id="CHEBI:147287"/>
        <dbReference type="ChEBI" id="CHEBI:456216"/>
        <dbReference type="EC" id="6.3.3.1"/>
    </reaction>
</comment>
<comment type="pathway">
    <text evidence="1">Purine metabolism; IMP biosynthesis via de novo pathway; 5-amino-1-(5-phospho-D-ribosyl)imidazole from N(2)-formyl-N(1)-(5-phospho-D-ribosyl)glycinamide: step 2/2.</text>
</comment>
<comment type="subcellular location">
    <subcellularLocation>
        <location evidence="1">Cytoplasm</location>
    </subcellularLocation>
</comment>
<comment type="similarity">
    <text evidence="1">Belongs to the AIR synthase family.</text>
</comment>
<proteinExistence type="inferred from homology"/>
<accession>B1XNH7</accession>
<protein>
    <recommendedName>
        <fullName evidence="1">Phosphoribosylformylglycinamidine cyclo-ligase</fullName>
        <ecNumber evidence="1">6.3.3.1</ecNumber>
    </recommendedName>
    <alternativeName>
        <fullName evidence="1">AIR synthase</fullName>
    </alternativeName>
    <alternativeName>
        <fullName evidence="1">AIRS</fullName>
    </alternativeName>
    <alternativeName>
        <fullName evidence="1">Phosphoribosyl-aminoimidazole synthetase</fullName>
    </alternativeName>
</protein>
<reference key="1">
    <citation type="submission" date="2008-02" db="EMBL/GenBank/DDBJ databases">
        <title>Complete sequence of Synechococcus sp. PCC 7002.</title>
        <authorList>
            <person name="Li T."/>
            <person name="Zhao J."/>
            <person name="Zhao C."/>
            <person name="Liu Z."/>
            <person name="Zhao F."/>
            <person name="Marquardt J."/>
            <person name="Nomura C.T."/>
            <person name="Persson S."/>
            <person name="Detter J.C."/>
            <person name="Richardson P.M."/>
            <person name="Lanz C."/>
            <person name="Schuster S.C."/>
            <person name="Wang J."/>
            <person name="Li S."/>
            <person name="Huang X."/>
            <person name="Cai T."/>
            <person name="Yu Z."/>
            <person name="Luo J."/>
            <person name="Zhao J."/>
            <person name="Bryant D.A."/>
        </authorList>
    </citation>
    <scope>NUCLEOTIDE SEQUENCE [LARGE SCALE GENOMIC DNA]</scope>
    <source>
        <strain>ATCC 27264 / PCC 7002 / PR-6</strain>
    </source>
</reference>
<keyword id="KW-0067">ATP-binding</keyword>
<keyword id="KW-0963">Cytoplasm</keyword>
<keyword id="KW-0436">Ligase</keyword>
<keyword id="KW-0547">Nucleotide-binding</keyword>
<keyword id="KW-0658">Purine biosynthesis</keyword>
<keyword id="KW-1185">Reference proteome</keyword>
<gene>
    <name evidence="1" type="primary">purM</name>
    <name type="ordered locus">SYNPCC7002_A0345</name>
</gene>
<sequence length="341" mass="36160">MDYQQAGVDIEAGRSFVKTIKDNVESTYRPGVLGGLGGFGGCFEIPAGYRQPVLISGTDGVGTKLKIAHQTDQHHTVGIDLVAMCVNDILTSGAEPLFFLDYLATGKLEPEQLAQVVAGIVEGCKQSGCALLGGETAEMPGFYQAGEYDLAGFCVGIVEKSEILDGSQVQVGDVAIALPSSGVHSNGFSLVRKIIEMNQLSWDDKPAAFQGKTLGEVFLTPTQIYVQAIQGALKAKMEIHGMAHITGGGLPENLPRCLQANQSMAIDPSTWEIPTLFQWLQTMGDVPQAAMWDTFNMGVGYVVIVPAPKAAENVAWFKAQGIAAWQVGTVVAGQGEVLGLQ</sequence>
<organism>
    <name type="scientific">Picosynechococcus sp. (strain ATCC 27264 / PCC 7002 / PR-6)</name>
    <name type="common">Agmenellum quadruplicatum</name>
    <dbReference type="NCBI Taxonomy" id="32049"/>
    <lineage>
        <taxon>Bacteria</taxon>
        <taxon>Bacillati</taxon>
        <taxon>Cyanobacteriota</taxon>
        <taxon>Cyanophyceae</taxon>
        <taxon>Oscillatoriophycideae</taxon>
        <taxon>Chroococcales</taxon>
        <taxon>Geminocystaceae</taxon>
        <taxon>Picosynechococcus</taxon>
    </lineage>
</organism>
<dbReference type="EC" id="6.3.3.1" evidence="1"/>
<dbReference type="EMBL" id="CP000951">
    <property type="protein sequence ID" value="ACA98355.1"/>
    <property type="molecule type" value="Genomic_DNA"/>
</dbReference>
<dbReference type="RefSeq" id="WP_012305979.1">
    <property type="nucleotide sequence ID" value="NZ_JAHHPU010000004.1"/>
</dbReference>
<dbReference type="SMR" id="B1XNH7"/>
<dbReference type="STRING" id="32049.SYNPCC7002_A0345"/>
<dbReference type="KEGG" id="syp:SYNPCC7002_A0345"/>
<dbReference type="eggNOG" id="COG0150">
    <property type="taxonomic scope" value="Bacteria"/>
</dbReference>
<dbReference type="HOGENOM" id="CLU_047116_0_0_3"/>
<dbReference type="UniPathway" id="UPA00074">
    <property type="reaction ID" value="UER00129"/>
</dbReference>
<dbReference type="Proteomes" id="UP000001688">
    <property type="component" value="Chromosome"/>
</dbReference>
<dbReference type="GO" id="GO:0005829">
    <property type="term" value="C:cytosol"/>
    <property type="evidence" value="ECO:0007669"/>
    <property type="project" value="TreeGrafter"/>
</dbReference>
<dbReference type="GO" id="GO:0005524">
    <property type="term" value="F:ATP binding"/>
    <property type="evidence" value="ECO:0007669"/>
    <property type="project" value="UniProtKB-KW"/>
</dbReference>
<dbReference type="GO" id="GO:0004637">
    <property type="term" value="F:phosphoribosylamine-glycine ligase activity"/>
    <property type="evidence" value="ECO:0007669"/>
    <property type="project" value="TreeGrafter"/>
</dbReference>
<dbReference type="GO" id="GO:0004641">
    <property type="term" value="F:phosphoribosylformylglycinamidine cyclo-ligase activity"/>
    <property type="evidence" value="ECO:0007669"/>
    <property type="project" value="UniProtKB-UniRule"/>
</dbReference>
<dbReference type="GO" id="GO:0006189">
    <property type="term" value="P:'de novo' IMP biosynthetic process"/>
    <property type="evidence" value="ECO:0007669"/>
    <property type="project" value="UniProtKB-UniRule"/>
</dbReference>
<dbReference type="GO" id="GO:0046084">
    <property type="term" value="P:adenine biosynthetic process"/>
    <property type="evidence" value="ECO:0007669"/>
    <property type="project" value="TreeGrafter"/>
</dbReference>
<dbReference type="CDD" id="cd02196">
    <property type="entry name" value="PurM"/>
    <property type="match status" value="1"/>
</dbReference>
<dbReference type="FunFam" id="3.30.1330.10:FF:000001">
    <property type="entry name" value="Phosphoribosylformylglycinamidine cyclo-ligase"/>
    <property type="match status" value="1"/>
</dbReference>
<dbReference type="FunFam" id="3.90.650.10:FF:000011">
    <property type="entry name" value="Phosphoribosylformylglycinamidine cyclo-ligase"/>
    <property type="match status" value="1"/>
</dbReference>
<dbReference type="Gene3D" id="3.90.650.10">
    <property type="entry name" value="PurM-like C-terminal domain"/>
    <property type="match status" value="1"/>
</dbReference>
<dbReference type="Gene3D" id="3.30.1330.10">
    <property type="entry name" value="PurM-like, N-terminal domain"/>
    <property type="match status" value="1"/>
</dbReference>
<dbReference type="HAMAP" id="MF_00741">
    <property type="entry name" value="AIRS"/>
    <property type="match status" value="1"/>
</dbReference>
<dbReference type="InterPro" id="IPR010918">
    <property type="entry name" value="PurM-like_C_dom"/>
</dbReference>
<dbReference type="InterPro" id="IPR036676">
    <property type="entry name" value="PurM-like_C_sf"/>
</dbReference>
<dbReference type="InterPro" id="IPR016188">
    <property type="entry name" value="PurM-like_N"/>
</dbReference>
<dbReference type="InterPro" id="IPR036921">
    <property type="entry name" value="PurM-like_N_sf"/>
</dbReference>
<dbReference type="InterPro" id="IPR004733">
    <property type="entry name" value="PurM_cligase"/>
</dbReference>
<dbReference type="NCBIfam" id="TIGR00878">
    <property type="entry name" value="purM"/>
    <property type="match status" value="1"/>
</dbReference>
<dbReference type="PANTHER" id="PTHR10520:SF12">
    <property type="entry name" value="TRIFUNCTIONAL PURINE BIOSYNTHETIC PROTEIN ADENOSINE-3"/>
    <property type="match status" value="1"/>
</dbReference>
<dbReference type="PANTHER" id="PTHR10520">
    <property type="entry name" value="TRIFUNCTIONAL PURINE BIOSYNTHETIC PROTEIN ADENOSINE-3-RELATED"/>
    <property type="match status" value="1"/>
</dbReference>
<dbReference type="Pfam" id="PF00586">
    <property type="entry name" value="AIRS"/>
    <property type="match status" value="1"/>
</dbReference>
<dbReference type="Pfam" id="PF02769">
    <property type="entry name" value="AIRS_C"/>
    <property type="match status" value="1"/>
</dbReference>
<dbReference type="SUPFAM" id="SSF56042">
    <property type="entry name" value="PurM C-terminal domain-like"/>
    <property type="match status" value="1"/>
</dbReference>
<dbReference type="SUPFAM" id="SSF55326">
    <property type="entry name" value="PurM N-terminal domain-like"/>
    <property type="match status" value="1"/>
</dbReference>
<feature type="chain" id="PRO_1000193051" description="Phosphoribosylformylglycinamidine cyclo-ligase">
    <location>
        <begin position="1"/>
        <end position="341"/>
    </location>
</feature>